<organism>
    <name type="scientific">Homo sapiens</name>
    <name type="common">Human</name>
    <dbReference type="NCBI Taxonomy" id="9606"/>
    <lineage>
        <taxon>Eukaryota</taxon>
        <taxon>Metazoa</taxon>
        <taxon>Chordata</taxon>
        <taxon>Craniata</taxon>
        <taxon>Vertebrata</taxon>
        <taxon>Euteleostomi</taxon>
        <taxon>Mammalia</taxon>
        <taxon>Eutheria</taxon>
        <taxon>Euarchontoglires</taxon>
        <taxon>Primates</taxon>
        <taxon>Haplorrhini</taxon>
        <taxon>Catarrhini</taxon>
        <taxon>Hominidae</taxon>
        <taxon>Homo</taxon>
    </lineage>
</organism>
<evidence type="ECO:0000250" key="1">
    <source>
        <dbReference type="UniProtKB" id="Q14671"/>
    </source>
</evidence>
<evidence type="ECO:0000250" key="2">
    <source>
        <dbReference type="UniProtKB" id="Q80U58"/>
    </source>
</evidence>
<evidence type="ECO:0000255" key="3">
    <source>
        <dbReference type="PROSITE-ProRule" id="PRU00317"/>
    </source>
</evidence>
<evidence type="ECO:0000255" key="4">
    <source>
        <dbReference type="PROSITE-ProRule" id="PRU00318"/>
    </source>
</evidence>
<evidence type="ECO:0000256" key="5">
    <source>
        <dbReference type="SAM" id="MobiDB-lite"/>
    </source>
</evidence>
<evidence type="ECO:0000269" key="6">
    <source>
    </source>
</evidence>
<evidence type="ECO:0000269" key="7">
    <source>
    </source>
</evidence>
<evidence type="ECO:0000269" key="8">
    <source>
    </source>
</evidence>
<evidence type="ECO:0000269" key="9">
    <source>
    </source>
</evidence>
<evidence type="ECO:0000269" key="10">
    <source>
    </source>
</evidence>
<evidence type="ECO:0000269" key="11">
    <source>
    </source>
</evidence>
<evidence type="ECO:0000269" key="12">
    <source>
    </source>
</evidence>
<evidence type="ECO:0000269" key="13">
    <source>
    </source>
</evidence>
<evidence type="ECO:0000269" key="14">
    <source>
    </source>
</evidence>
<evidence type="ECO:0000269" key="15">
    <source>
    </source>
</evidence>
<evidence type="ECO:0000269" key="16">
    <source>
    </source>
</evidence>
<evidence type="ECO:0000269" key="17">
    <source>
    </source>
</evidence>
<evidence type="ECO:0000269" key="18">
    <source>
    </source>
</evidence>
<evidence type="ECO:0000269" key="19">
    <source>
    </source>
</evidence>
<evidence type="ECO:0000269" key="20">
    <source>
    </source>
</evidence>
<evidence type="ECO:0000303" key="21">
    <source>
    </source>
</evidence>
<evidence type="ECO:0000303" key="22">
    <source>
    </source>
</evidence>
<evidence type="ECO:0000303" key="23">
    <source>
    </source>
</evidence>
<evidence type="ECO:0000303" key="24">
    <source>
    </source>
</evidence>
<evidence type="ECO:0000303" key="25">
    <source>
    </source>
</evidence>
<evidence type="ECO:0000305" key="26">
    <source>
    </source>
</evidence>
<evidence type="ECO:0007744" key="27">
    <source>
    </source>
</evidence>
<evidence type="ECO:0007744" key="28">
    <source>
    </source>
</evidence>
<evidence type="ECO:0007744" key="29">
    <source>
    </source>
</evidence>
<evidence type="ECO:0007744" key="30">
    <source>
    </source>
</evidence>
<evidence type="ECO:0007744" key="31">
    <source>
    </source>
</evidence>
<evidence type="ECO:0007744" key="32">
    <source>
    </source>
</evidence>
<evidence type="ECO:0007744" key="33">
    <source>
    </source>
</evidence>
<evidence type="ECO:0007744" key="34">
    <source>
    </source>
</evidence>
<evidence type="ECO:0007829" key="35">
    <source>
        <dbReference type="PDB" id="3Q0Q"/>
    </source>
</evidence>
<gene>
    <name type="primary">PUM2</name>
    <name type="synonym">KIAA0235</name>
    <name type="synonym">PUMH2</name>
</gene>
<accession>Q8TB72</accession>
<accession>B3KSL0</accession>
<accession>B4E2B6</accession>
<accession>D6W527</accession>
<accession>O00234</accession>
<accession>Q53TV7</accession>
<accession>Q8WY43</accession>
<accession>Q9HAN2</accession>
<keyword id="KW-0002">3D-structure</keyword>
<keyword id="KW-0025">Alternative splicing</keyword>
<keyword id="KW-0963">Cytoplasm</keyword>
<keyword id="KW-0488">Methylation</keyword>
<keyword id="KW-0597">Phosphoprotein</keyword>
<keyword id="KW-1267">Proteomics identification</keyword>
<keyword id="KW-1185">Reference proteome</keyword>
<keyword id="KW-0677">Repeat</keyword>
<keyword id="KW-0694">RNA-binding</keyword>
<keyword id="KW-0810">Translation regulation</keyword>
<sequence length="1066" mass="114216">MNHDFQALALESRGMGELLPTKKFWEPDDSTKDGQKGIFLGDDEWRETAWGASHHSMSQPIMVQRRSGQGFHGNSEVNAILSPRSESGGLGVSMVEYVLSSSPADKLDSRFRKGNFGTRDAETDGPEKGDQKGKASPFEEDQNRDLKQGDDDDSKINGRGLPNGMDADCKDFNRTPGSRQASPTEVVERLGPNTNPSEGLGPLPNPTANKPLVEEFSNPETQNLDAMEQVGLESLQFDYPGNQVPMDSSGATVGLFDYNSQQQLFQRTNALTVQQLTAAQQQQYALAAAQQPHIAGVFSAGLAPAAFVPNPYIISAAPPGTDPYTAAGLAAAATLAGPAVVPPQYYGVPWGVYPANLFQQQAAAAANNTASQQAASQAQPGQQQVLRAGAGQRPLTPNQGQQGQQAESLAAAAAANPTLAFGQGLATGMPGYQVLAPTAYYDQTGALVVGPGARTGLGAPVRLMAPTPVLISSAAAQAAAAAAAGGTASSLTGSTNGLFRPIGTQPPQQQQQQPSTNLQSNSFYGSSSLTNSSQSSSLFSHGPGQPGSTSLGFGSGNSLGAAIGSALSGFGSSVGSSASSSATRRESLSTSSDLYKRSSSSLAPIGQPFYNSLGFSSSPSPIGMPLPSQTPGHSLTPPPSLSSHGSSSSLHLGGLTNGSGRYISAAPGAEAKYRSASSTSSLFSSSSQLFPPSRLRYNRSDIMPSGRSRLLEDFRNNRFPNLQLRDLIGHIVEFSQDQHGSRFIQQKLERATPAERQMVFNEILQAAYQLMTDVFGNYVIQKFFEFGSLDQKLALATRIRGHVLPLALQMYGCRVIQKALESISSDQQVISEMVKELDGHVLKCVKDQNGNHVVQKCIECVQPQSLQFIIDAFKGQVFVLSTHPYGCRVIQRILEHCTAEQTLPILEELHQHTEQLVQDQYGNYVIQHVLEHGRPEDKSKIVSEIRGKVLALSQHKFASNVVEKCVTHASRAERALLIDEVCCQNDGPHSALYTMMKDQYANYVVQKMIDMAEPAQRKIIMHKIRPHITTLRKYTYGKHILAKLEKYYLKNSPDLGPIGGPPNGML</sequence>
<dbReference type="EMBL" id="AF315591">
    <property type="protein sequence ID" value="AAG31806.1"/>
    <property type="molecule type" value="mRNA"/>
</dbReference>
<dbReference type="EMBL" id="D87078">
    <property type="protein sequence ID" value="BAA19665.3"/>
    <property type="molecule type" value="mRNA"/>
</dbReference>
<dbReference type="EMBL" id="AK093847">
    <property type="protein sequence ID" value="BAG52772.1"/>
    <property type="molecule type" value="mRNA"/>
</dbReference>
<dbReference type="EMBL" id="AK304198">
    <property type="protein sequence ID" value="BAG65078.1"/>
    <property type="molecule type" value="mRNA"/>
</dbReference>
<dbReference type="EMBL" id="AC007041">
    <property type="protein sequence ID" value="AAY15026.1"/>
    <property type="molecule type" value="Genomic_DNA"/>
</dbReference>
<dbReference type="EMBL" id="CH471053">
    <property type="protein sequence ID" value="EAX00821.1"/>
    <property type="molecule type" value="Genomic_DNA"/>
</dbReference>
<dbReference type="EMBL" id="CH471053">
    <property type="protein sequence ID" value="EAX00823.1"/>
    <property type="molecule type" value="Genomic_DNA"/>
</dbReference>
<dbReference type="EMBL" id="BC024218">
    <property type="protein sequence ID" value="AAH24218.2"/>
    <property type="molecule type" value="mRNA"/>
</dbReference>
<dbReference type="EMBL" id="BC112046">
    <property type="protein sequence ID" value="AAI12047.1"/>
    <property type="molecule type" value="mRNA"/>
</dbReference>
<dbReference type="EMBL" id="BC112048">
    <property type="protein sequence ID" value="AAI12049.1"/>
    <property type="molecule type" value="mRNA"/>
</dbReference>
<dbReference type="EMBL" id="AF272350">
    <property type="protein sequence ID" value="AAL36981.1"/>
    <property type="molecule type" value="mRNA"/>
</dbReference>
<dbReference type="CCDS" id="CCDS1698.1">
    <molecule id="Q8TB72-3"/>
</dbReference>
<dbReference type="CCDS" id="CCDS92717.1">
    <molecule id="Q8TB72-1"/>
</dbReference>
<dbReference type="RefSeq" id="NP_001269681.1">
    <molecule id="Q8TB72-4"/>
    <property type="nucleotide sequence ID" value="NM_001282752.3"/>
</dbReference>
<dbReference type="RefSeq" id="NP_001339846.1">
    <molecule id="Q8TB72-1"/>
    <property type="nucleotide sequence ID" value="NM_001352917.3"/>
</dbReference>
<dbReference type="RefSeq" id="NP_001339847.1">
    <molecule id="Q8TB72-3"/>
    <property type="nucleotide sequence ID" value="NM_001352918.2"/>
</dbReference>
<dbReference type="RefSeq" id="NP_001339848.1">
    <molecule id="Q8TB72-3"/>
    <property type="nucleotide sequence ID" value="NM_001352919.3"/>
</dbReference>
<dbReference type="RefSeq" id="NP_001339849.1">
    <molecule id="Q8TB72-2"/>
    <property type="nucleotide sequence ID" value="NM_001352920.3"/>
</dbReference>
<dbReference type="RefSeq" id="NP_001339852.1">
    <molecule id="Q8TB72-2"/>
    <property type="nucleotide sequence ID" value="NM_001352923.3"/>
</dbReference>
<dbReference type="RefSeq" id="NP_056132.1">
    <molecule id="Q8TB72-3"/>
    <property type="nucleotide sequence ID" value="NM_015317.5"/>
</dbReference>
<dbReference type="RefSeq" id="XP_005262664.1">
    <molecule id="Q8TB72-1"/>
    <property type="nucleotide sequence ID" value="XM_005262607.2"/>
</dbReference>
<dbReference type="RefSeq" id="XP_005262666.1">
    <molecule id="Q8TB72-2"/>
    <property type="nucleotide sequence ID" value="XM_005262609.2"/>
</dbReference>
<dbReference type="RefSeq" id="XP_006712036.1">
    <property type="nucleotide sequence ID" value="XM_006711973.1"/>
</dbReference>
<dbReference type="RefSeq" id="XP_006712037.1">
    <molecule id="Q8TB72-1"/>
    <property type="nucleotide sequence ID" value="XM_006711974.3"/>
</dbReference>
<dbReference type="RefSeq" id="XP_011531021.1">
    <molecule id="Q8TB72-1"/>
    <property type="nucleotide sequence ID" value="XM_011532719.2"/>
</dbReference>
<dbReference type="RefSeq" id="XP_011531022.1">
    <molecule id="Q8TB72-1"/>
    <property type="nucleotide sequence ID" value="XM_011532720.3"/>
</dbReference>
<dbReference type="RefSeq" id="XP_011531023.1">
    <molecule id="Q8TB72-1"/>
    <property type="nucleotide sequence ID" value="XM_011532721.3"/>
</dbReference>
<dbReference type="RefSeq" id="XP_016859190.1">
    <property type="nucleotide sequence ID" value="XM_017003701.1"/>
</dbReference>
<dbReference type="RefSeq" id="XP_016859191.1">
    <property type="nucleotide sequence ID" value="XM_017003702.1"/>
</dbReference>
<dbReference type="RefSeq" id="XP_016859196.1">
    <property type="nucleotide sequence ID" value="XM_017003707.1"/>
</dbReference>
<dbReference type="RefSeq" id="XP_016859197.1">
    <property type="nucleotide sequence ID" value="XM_017003708.1"/>
</dbReference>
<dbReference type="RefSeq" id="XP_047299758.1">
    <molecule id="Q8TB72-1"/>
    <property type="nucleotide sequence ID" value="XM_047443802.1"/>
</dbReference>
<dbReference type="RefSeq" id="XP_047299759.1">
    <molecule id="Q8TB72-1"/>
    <property type="nucleotide sequence ID" value="XM_047443803.1"/>
</dbReference>
<dbReference type="RefSeq" id="XP_047299760.1">
    <molecule id="Q8TB72-1"/>
    <property type="nucleotide sequence ID" value="XM_047443804.1"/>
</dbReference>
<dbReference type="RefSeq" id="XP_047299761.1">
    <molecule id="Q8TB72-3"/>
    <property type="nucleotide sequence ID" value="XM_047443805.1"/>
</dbReference>
<dbReference type="RefSeq" id="XP_047299762.1">
    <molecule id="Q8TB72-3"/>
    <property type="nucleotide sequence ID" value="XM_047443806.1"/>
</dbReference>
<dbReference type="RefSeq" id="XP_047299763.1">
    <molecule id="Q8TB72-3"/>
    <property type="nucleotide sequence ID" value="XM_047443807.1"/>
</dbReference>
<dbReference type="RefSeq" id="XP_047299764.1">
    <molecule id="Q8TB72-3"/>
    <property type="nucleotide sequence ID" value="XM_047443808.1"/>
</dbReference>
<dbReference type="RefSeq" id="XP_047299765.1">
    <molecule id="Q8TB72-3"/>
    <property type="nucleotide sequence ID" value="XM_047443809.1"/>
</dbReference>
<dbReference type="RefSeq" id="XP_047299766.1">
    <molecule id="Q8TB72-3"/>
    <property type="nucleotide sequence ID" value="XM_047443810.1"/>
</dbReference>
<dbReference type="RefSeq" id="XP_047299772.1">
    <molecule id="Q8TB72-4"/>
    <property type="nucleotide sequence ID" value="XM_047443816.1"/>
</dbReference>
<dbReference type="RefSeq" id="XP_047299773.1">
    <molecule id="Q8TB72-2"/>
    <property type="nucleotide sequence ID" value="XM_047443817.1"/>
</dbReference>
<dbReference type="RefSeq" id="XP_047299774.1">
    <molecule id="Q8TB72-2"/>
    <property type="nucleotide sequence ID" value="XM_047443818.1"/>
</dbReference>
<dbReference type="RefSeq" id="XP_047299775.1">
    <molecule id="Q8TB72-2"/>
    <property type="nucleotide sequence ID" value="XM_047443819.1"/>
</dbReference>
<dbReference type="RefSeq" id="XP_047299776.1">
    <molecule id="Q8TB72-2"/>
    <property type="nucleotide sequence ID" value="XM_047443820.1"/>
</dbReference>
<dbReference type="RefSeq" id="XP_047299777.1">
    <molecule id="Q8TB72-2"/>
    <property type="nucleotide sequence ID" value="XM_047443821.1"/>
</dbReference>
<dbReference type="RefSeq" id="XP_054197137.1">
    <molecule id="Q8TB72-1"/>
    <property type="nucleotide sequence ID" value="XM_054341162.1"/>
</dbReference>
<dbReference type="RefSeq" id="XP_054197138.1">
    <molecule id="Q8TB72-1"/>
    <property type="nucleotide sequence ID" value="XM_054341163.1"/>
</dbReference>
<dbReference type="RefSeq" id="XP_054197139.1">
    <molecule id="Q8TB72-1"/>
    <property type="nucleotide sequence ID" value="XM_054341164.1"/>
</dbReference>
<dbReference type="RefSeq" id="XP_054197140.1">
    <molecule id="Q8TB72-1"/>
    <property type="nucleotide sequence ID" value="XM_054341165.1"/>
</dbReference>
<dbReference type="RefSeq" id="XP_054197141.1">
    <molecule id="Q8TB72-1"/>
    <property type="nucleotide sequence ID" value="XM_054341166.1"/>
</dbReference>
<dbReference type="RefSeq" id="XP_054197142.1">
    <molecule id="Q8TB72-1"/>
    <property type="nucleotide sequence ID" value="XM_054341167.1"/>
</dbReference>
<dbReference type="RefSeq" id="XP_054197143.1">
    <molecule id="Q8TB72-1"/>
    <property type="nucleotide sequence ID" value="XM_054341168.1"/>
</dbReference>
<dbReference type="RefSeq" id="XP_054197144.1">
    <molecule id="Q8TB72-3"/>
    <property type="nucleotide sequence ID" value="XM_054341169.1"/>
</dbReference>
<dbReference type="RefSeq" id="XP_054197145.1">
    <molecule id="Q8TB72-1"/>
    <property type="nucleotide sequence ID" value="XM_054341170.1"/>
</dbReference>
<dbReference type="RefSeq" id="XP_054197146.1">
    <molecule id="Q8TB72-3"/>
    <property type="nucleotide sequence ID" value="XM_054341171.1"/>
</dbReference>
<dbReference type="RefSeq" id="XP_054197147.1">
    <molecule id="Q8TB72-3"/>
    <property type="nucleotide sequence ID" value="XM_054341172.1"/>
</dbReference>
<dbReference type="RefSeq" id="XP_054197148.1">
    <molecule id="Q8TB72-3"/>
    <property type="nucleotide sequence ID" value="XM_054341173.1"/>
</dbReference>
<dbReference type="RefSeq" id="XP_054197149.1">
    <molecule id="Q8TB72-3"/>
    <property type="nucleotide sequence ID" value="XM_054341174.1"/>
</dbReference>
<dbReference type="RefSeq" id="XP_054197150.1">
    <molecule id="Q8TB72-3"/>
    <property type="nucleotide sequence ID" value="XM_054341175.1"/>
</dbReference>
<dbReference type="RefSeq" id="XP_054197156.1">
    <molecule id="Q8TB72-4"/>
    <property type="nucleotide sequence ID" value="XM_054341181.1"/>
</dbReference>
<dbReference type="RefSeq" id="XP_054197157.1">
    <molecule id="Q8TB72-2"/>
    <property type="nucleotide sequence ID" value="XM_054341182.1"/>
</dbReference>
<dbReference type="RefSeq" id="XP_054197158.1">
    <molecule id="Q8TB72-2"/>
    <property type="nucleotide sequence ID" value="XM_054341183.1"/>
</dbReference>
<dbReference type="RefSeq" id="XP_054197159.1">
    <molecule id="Q8TB72-2"/>
    <property type="nucleotide sequence ID" value="XM_054341184.1"/>
</dbReference>
<dbReference type="RefSeq" id="XP_054197160.1">
    <molecule id="Q8TB72-2"/>
    <property type="nucleotide sequence ID" value="XM_054341185.1"/>
</dbReference>
<dbReference type="RefSeq" id="XP_054197161.1">
    <molecule id="Q8TB72-2"/>
    <property type="nucleotide sequence ID" value="XM_054341186.1"/>
</dbReference>
<dbReference type="RefSeq" id="XP_054197162.1">
    <molecule id="Q8TB72-2"/>
    <property type="nucleotide sequence ID" value="XM_054341187.1"/>
</dbReference>
<dbReference type="PDB" id="3Q0Q">
    <property type="method" value="X-ray"/>
    <property type="resolution" value="2.00 A"/>
    <property type="chains" value="A=706-1056"/>
</dbReference>
<dbReference type="PDB" id="3Q0R">
    <property type="method" value="X-ray"/>
    <property type="resolution" value="2.00 A"/>
    <property type="chains" value="A=706-1056"/>
</dbReference>
<dbReference type="PDB" id="3Q0S">
    <property type="method" value="X-ray"/>
    <property type="resolution" value="2.00 A"/>
    <property type="chains" value="A=706-1056"/>
</dbReference>
<dbReference type="PDBsum" id="3Q0Q"/>
<dbReference type="PDBsum" id="3Q0R"/>
<dbReference type="PDBsum" id="3Q0S"/>
<dbReference type="SMR" id="Q8TB72"/>
<dbReference type="BioGRID" id="116949">
    <property type="interactions" value="178"/>
</dbReference>
<dbReference type="FunCoup" id="Q8TB72">
    <property type="interactions" value="3421"/>
</dbReference>
<dbReference type="IntAct" id="Q8TB72">
    <property type="interactions" value="56"/>
</dbReference>
<dbReference type="MINT" id="Q8TB72"/>
<dbReference type="STRING" id="9606.ENSP00000338173"/>
<dbReference type="GlyCosmos" id="Q8TB72">
    <property type="glycosylation" value="1 site, 1 glycan"/>
</dbReference>
<dbReference type="GlyGen" id="Q8TB72">
    <property type="glycosylation" value="4 sites, 1 N-linked glycan (1 site), 1 O-linked glycan (3 sites)"/>
</dbReference>
<dbReference type="iPTMnet" id="Q8TB72"/>
<dbReference type="PhosphoSitePlus" id="Q8TB72"/>
<dbReference type="BioMuta" id="PUM2"/>
<dbReference type="DMDM" id="41688714"/>
<dbReference type="jPOST" id="Q8TB72"/>
<dbReference type="MassIVE" id="Q8TB72"/>
<dbReference type="PaxDb" id="9606-ENSP00000338173"/>
<dbReference type="PeptideAtlas" id="Q8TB72"/>
<dbReference type="ProteomicsDB" id="5806"/>
<dbReference type="ProteomicsDB" id="73970">
    <molecule id="Q8TB72-1"/>
</dbReference>
<dbReference type="ProteomicsDB" id="73971">
    <molecule id="Q8TB72-2"/>
</dbReference>
<dbReference type="ProteomicsDB" id="73972">
    <molecule id="Q8TB72-3"/>
</dbReference>
<dbReference type="Pumba" id="Q8TB72"/>
<dbReference type="Antibodypedia" id="12999">
    <property type="antibodies" value="435 antibodies from 37 providers"/>
</dbReference>
<dbReference type="DNASU" id="23369"/>
<dbReference type="Ensembl" id="ENST00000338086.9">
    <molecule id="Q8TB72-3"/>
    <property type="protein sequence ID" value="ENSP00000338173.5"/>
    <property type="gene ID" value="ENSG00000055917.17"/>
</dbReference>
<dbReference type="Ensembl" id="ENST00000361078.7">
    <molecule id="Q8TB72-3"/>
    <property type="protein sequence ID" value="ENSP00000354370.4"/>
    <property type="gene ID" value="ENSG00000055917.17"/>
</dbReference>
<dbReference type="Ensembl" id="ENST00000704930.1">
    <molecule id="Q8TB72-1"/>
    <property type="protein sequence ID" value="ENSP00000516061.1"/>
    <property type="gene ID" value="ENSG00000055917.17"/>
</dbReference>
<dbReference type="GeneID" id="23369"/>
<dbReference type="KEGG" id="hsa:23369"/>
<dbReference type="MANE-Select" id="ENST00000361078.7">
    <molecule id="Q8TB72-3"/>
    <property type="protein sequence ID" value="ENSP00000354370.4"/>
    <property type="RefSeq nucleotide sequence ID" value="NM_015317.5"/>
    <property type="RefSeq protein sequence ID" value="NP_056132.1"/>
</dbReference>
<dbReference type="UCSC" id="uc002rdt.2">
    <molecule id="Q8TB72-1"/>
    <property type="organism name" value="human"/>
</dbReference>
<dbReference type="AGR" id="HGNC:14958"/>
<dbReference type="CTD" id="23369"/>
<dbReference type="DisGeNET" id="23369"/>
<dbReference type="GeneCards" id="PUM2"/>
<dbReference type="HGNC" id="HGNC:14958">
    <property type="gene designation" value="PUM2"/>
</dbReference>
<dbReference type="HPA" id="ENSG00000055917">
    <property type="expression patterns" value="Low tissue specificity"/>
</dbReference>
<dbReference type="MIM" id="607205">
    <property type="type" value="gene"/>
</dbReference>
<dbReference type="neXtProt" id="NX_Q8TB72"/>
<dbReference type="OpenTargets" id="ENSG00000055917"/>
<dbReference type="PharmGKB" id="PA34043"/>
<dbReference type="VEuPathDB" id="HostDB:ENSG00000055917"/>
<dbReference type="eggNOG" id="KOG1488">
    <property type="taxonomic scope" value="Eukaryota"/>
</dbReference>
<dbReference type="GeneTree" id="ENSGT00940000157575"/>
<dbReference type="InParanoid" id="Q8TB72"/>
<dbReference type="OMA" id="RGMMHAN"/>
<dbReference type="OrthoDB" id="668540at2759"/>
<dbReference type="PAN-GO" id="Q8TB72">
    <property type="GO annotations" value="5 GO annotations based on evolutionary models"/>
</dbReference>
<dbReference type="PhylomeDB" id="Q8TB72"/>
<dbReference type="TreeFam" id="TF318160"/>
<dbReference type="PathwayCommons" id="Q8TB72"/>
<dbReference type="Reactome" id="R-HSA-8951664">
    <property type="pathway name" value="Neddylation"/>
</dbReference>
<dbReference type="SignaLink" id="Q8TB72"/>
<dbReference type="SIGNOR" id="Q8TB72"/>
<dbReference type="BioGRID-ORCS" id="23369">
    <property type="hits" value="29 hits in 1155 CRISPR screens"/>
</dbReference>
<dbReference type="CD-CODE" id="232F8A39">
    <property type="entry name" value="P-body"/>
</dbReference>
<dbReference type="CD-CODE" id="28619EF7">
    <property type="entry name" value="NP bodies"/>
</dbReference>
<dbReference type="CD-CODE" id="DEE660B4">
    <property type="entry name" value="Stress granule"/>
</dbReference>
<dbReference type="ChiTaRS" id="PUM2">
    <property type="organism name" value="human"/>
</dbReference>
<dbReference type="EvolutionaryTrace" id="Q8TB72"/>
<dbReference type="GeneWiki" id="PUM2"/>
<dbReference type="GenomeRNAi" id="23369"/>
<dbReference type="Pharos" id="Q8TB72">
    <property type="development level" value="Tbio"/>
</dbReference>
<dbReference type="PRO" id="PR:Q8TB72"/>
<dbReference type="Proteomes" id="UP000005640">
    <property type="component" value="Chromosome 2"/>
</dbReference>
<dbReference type="RNAct" id="Q8TB72">
    <property type="molecule type" value="protein"/>
</dbReference>
<dbReference type="Bgee" id="ENSG00000055917">
    <property type="expression patterns" value="Expressed in colonic epithelium and 214 other cell types or tissues"/>
</dbReference>
<dbReference type="ExpressionAtlas" id="Q8TB72">
    <property type="expression patterns" value="baseline and differential"/>
</dbReference>
<dbReference type="GO" id="GO:0005737">
    <property type="term" value="C:cytoplasm"/>
    <property type="evidence" value="ECO:0000318"/>
    <property type="project" value="GO_Central"/>
</dbReference>
<dbReference type="GO" id="GO:0010494">
    <property type="term" value="C:cytoplasmic stress granule"/>
    <property type="evidence" value="ECO:0000314"/>
    <property type="project" value="UniProtKB"/>
</dbReference>
<dbReference type="GO" id="GO:0005829">
    <property type="term" value="C:cytosol"/>
    <property type="evidence" value="ECO:0000314"/>
    <property type="project" value="HPA"/>
</dbReference>
<dbReference type="GO" id="GO:0098978">
    <property type="term" value="C:glutamatergic synapse"/>
    <property type="evidence" value="ECO:0007669"/>
    <property type="project" value="Ensembl"/>
</dbReference>
<dbReference type="GO" id="GO:0043025">
    <property type="term" value="C:neuronal cell body"/>
    <property type="evidence" value="ECO:0007669"/>
    <property type="project" value="Ensembl"/>
</dbReference>
<dbReference type="GO" id="GO:0031965">
    <property type="term" value="C:nuclear membrane"/>
    <property type="evidence" value="ECO:0000314"/>
    <property type="project" value="HPA"/>
</dbReference>
<dbReference type="GO" id="GO:0048471">
    <property type="term" value="C:perinuclear region of cytoplasm"/>
    <property type="evidence" value="ECO:0000314"/>
    <property type="project" value="UniProtKB"/>
</dbReference>
<dbReference type="GO" id="GO:0098794">
    <property type="term" value="C:postsynapse"/>
    <property type="evidence" value="ECO:0007669"/>
    <property type="project" value="Ensembl"/>
</dbReference>
<dbReference type="GO" id="GO:0106222">
    <property type="term" value="F:lncRNA binding"/>
    <property type="evidence" value="ECO:0007669"/>
    <property type="project" value="Ensembl"/>
</dbReference>
<dbReference type="GO" id="GO:0035198">
    <property type="term" value="F:miRNA binding"/>
    <property type="evidence" value="ECO:0000314"/>
    <property type="project" value="UniProtKB"/>
</dbReference>
<dbReference type="GO" id="GO:0003730">
    <property type="term" value="F:mRNA 3'-UTR binding"/>
    <property type="evidence" value="ECO:0000314"/>
    <property type="project" value="UniProtKB"/>
</dbReference>
<dbReference type="GO" id="GO:0062104">
    <property type="term" value="F:pumilio-response element binding"/>
    <property type="evidence" value="ECO:0007669"/>
    <property type="project" value="Ensembl"/>
</dbReference>
<dbReference type="GO" id="GO:0003723">
    <property type="term" value="F:RNA binding"/>
    <property type="evidence" value="ECO:0000314"/>
    <property type="project" value="UniProtKB"/>
</dbReference>
<dbReference type="GO" id="GO:0061158">
    <property type="term" value="P:3'-UTR-mediated mRNA destabilization"/>
    <property type="evidence" value="ECO:0000304"/>
    <property type="project" value="ARUK-UCL"/>
</dbReference>
<dbReference type="GO" id="GO:0060612">
    <property type="term" value="P:adipose tissue development"/>
    <property type="evidence" value="ECO:0007669"/>
    <property type="project" value="Ensembl"/>
</dbReference>
<dbReference type="GO" id="GO:0051276">
    <property type="term" value="P:chromosome organization"/>
    <property type="evidence" value="ECO:0007669"/>
    <property type="project" value="Ensembl"/>
</dbReference>
<dbReference type="GO" id="GO:0001942">
    <property type="term" value="P:hair follicle development"/>
    <property type="evidence" value="ECO:0007669"/>
    <property type="project" value="Ensembl"/>
</dbReference>
<dbReference type="GO" id="GO:0035196">
    <property type="term" value="P:miRNA processing"/>
    <property type="evidence" value="ECO:0000315"/>
    <property type="project" value="UniProtKB"/>
</dbReference>
<dbReference type="GO" id="GO:0007005">
    <property type="term" value="P:mitochondrion organization"/>
    <property type="evidence" value="ECO:0007669"/>
    <property type="project" value="Ensembl"/>
</dbReference>
<dbReference type="GO" id="GO:2000637">
    <property type="term" value="P:positive regulation of miRNA-mediated gene silencing"/>
    <property type="evidence" value="ECO:0000315"/>
    <property type="project" value="UniProtKB"/>
</dbReference>
<dbReference type="GO" id="GO:1900246">
    <property type="term" value="P:positive regulation of RIG-I signaling pathway"/>
    <property type="evidence" value="ECO:0000314"/>
    <property type="project" value="UniProtKB"/>
</dbReference>
<dbReference type="GO" id="GO:0048687">
    <property type="term" value="P:positive regulation of sprouting of injured axon"/>
    <property type="evidence" value="ECO:0007669"/>
    <property type="project" value="Ensembl"/>
</dbReference>
<dbReference type="GO" id="GO:0010608">
    <property type="term" value="P:post-transcriptional regulation of gene expression"/>
    <property type="evidence" value="ECO:0000314"/>
    <property type="project" value="MGI"/>
</dbReference>
<dbReference type="GO" id="GO:0051983">
    <property type="term" value="P:regulation of chromosome segregation"/>
    <property type="evidence" value="ECO:0000314"/>
    <property type="project" value="UniProtKB"/>
</dbReference>
<dbReference type="GO" id="GO:1904580">
    <property type="term" value="P:regulation of intracellular mRNA localization"/>
    <property type="evidence" value="ECO:0007669"/>
    <property type="project" value="Ensembl"/>
</dbReference>
<dbReference type="GO" id="GO:0060964">
    <property type="term" value="P:regulation of miRNA-mediated gene silencing"/>
    <property type="evidence" value="ECO:0000304"/>
    <property type="project" value="UniProtKB"/>
</dbReference>
<dbReference type="GO" id="GO:0043488">
    <property type="term" value="P:regulation of mRNA stability"/>
    <property type="evidence" value="ECO:0000314"/>
    <property type="project" value="UniProtKB"/>
</dbReference>
<dbReference type="GO" id="GO:0150052">
    <property type="term" value="P:regulation of postsynapse assembly"/>
    <property type="evidence" value="ECO:0007669"/>
    <property type="project" value="Ensembl"/>
</dbReference>
<dbReference type="GO" id="GO:0006417">
    <property type="term" value="P:regulation of translation"/>
    <property type="evidence" value="ECO:0007669"/>
    <property type="project" value="UniProtKB-KW"/>
</dbReference>
<dbReference type="GO" id="GO:0022904">
    <property type="term" value="P:respiratory electron transport chain"/>
    <property type="evidence" value="ECO:0007669"/>
    <property type="project" value="Ensembl"/>
</dbReference>
<dbReference type="GO" id="GO:0001501">
    <property type="term" value="P:skeletal system development"/>
    <property type="evidence" value="ECO:0007669"/>
    <property type="project" value="Ensembl"/>
</dbReference>
<dbReference type="GO" id="GO:0034063">
    <property type="term" value="P:stress granule assembly"/>
    <property type="evidence" value="ECO:0007669"/>
    <property type="project" value="Ensembl"/>
</dbReference>
<dbReference type="CDD" id="cd07920">
    <property type="entry name" value="Pumilio"/>
    <property type="match status" value="1"/>
</dbReference>
<dbReference type="FunFam" id="1.25.10.10:FF:000004">
    <property type="entry name" value="Pumilio homolog 1 isoform 2"/>
    <property type="match status" value="1"/>
</dbReference>
<dbReference type="Gene3D" id="1.25.10.10">
    <property type="entry name" value="Leucine-rich Repeat Variant"/>
    <property type="match status" value="1"/>
</dbReference>
<dbReference type="InterPro" id="IPR011989">
    <property type="entry name" value="ARM-like"/>
</dbReference>
<dbReference type="InterPro" id="IPR016024">
    <property type="entry name" value="ARM-type_fold"/>
</dbReference>
<dbReference type="InterPro" id="IPR033133">
    <property type="entry name" value="PUM-HD"/>
</dbReference>
<dbReference type="InterPro" id="IPR033712">
    <property type="entry name" value="Pumilio_RNA-bd"/>
</dbReference>
<dbReference type="InterPro" id="IPR001313">
    <property type="entry name" value="Pumilio_RNA-bd_rpt"/>
</dbReference>
<dbReference type="PANTHER" id="PTHR12537:SF52">
    <property type="entry name" value="PUMILIO HOMOLOG 2"/>
    <property type="match status" value="1"/>
</dbReference>
<dbReference type="PANTHER" id="PTHR12537">
    <property type="entry name" value="RNA BINDING PROTEIN PUMILIO-RELATED"/>
    <property type="match status" value="1"/>
</dbReference>
<dbReference type="Pfam" id="PF00806">
    <property type="entry name" value="PUF"/>
    <property type="match status" value="8"/>
</dbReference>
<dbReference type="SMART" id="SM00025">
    <property type="entry name" value="Pumilio"/>
    <property type="match status" value="8"/>
</dbReference>
<dbReference type="SUPFAM" id="SSF48371">
    <property type="entry name" value="ARM repeat"/>
    <property type="match status" value="1"/>
</dbReference>
<dbReference type="PROSITE" id="PS50302">
    <property type="entry name" value="PUM"/>
    <property type="match status" value="8"/>
</dbReference>
<dbReference type="PROSITE" id="PS50303">
    <property type="entry name" value="PUM_HD"/>
    <property type="match status" value="1"/>
</dbReference>
<reference key="1">
    <citation type="journal article" date="2002" name="Gene">
        <title>Cloning and comparative sequence analysis of PUM1 and PUM2 genes, human members of the Pumilio family of RNA-binding proteins.</title>
        <authorList>
            <person name="Spassov D.S."/>
            <person name="Jurecic R."/>
        </authorList>
    </citation>
    <scope>NUCLEOTIDE SEQUENCE [MRNA] (ISOFORM 3)</scope>
    <scope>TISSUE SPECIFICITY</scope>
</reference>
<reference key="2">
    <citation type="journal article" date="1996" name="DNA Res.">
        <title>Prediction of the coding sequences of unidentified human genes. VI. The coding sequences of 80 new genes (KIAA0201-KIAA0280) deduced by analysis of cDNA clones from cell line KG-1 and brain.</title>
        <authorList>
            <person name="Nagase T."/>
            <person name="Seki N."/>
            <person name="Ishikawa K."/>
            <person name="Ohira M."/>
            <person name="Kawarabayasi Y."/>
            <person name="Ohara O."/>
            <person name="Tanaka A."/>
            <person name="Kotani H."/>
            <person name="Miyajima N."/>
            <person name="Nomura N."/>
        </authorList>
    </citation>
    <scope>NUCLEOTIDE SEQUENCE [LARGE SCALE MRNA] (ISOFORM 3)</scope>
    <source>
        <tissue>Brain</tissue>
    </source>
</reference>
<reference key="3">
    <citation type="journal article" date="2002" name="DNA Res.">
        <title>Construction of expression-ready cDNA clones for KIAA genes: manual curation of 330 KIAA cDNA clones.</title>
        <authorList>
            <person name="Nakajima D."/>
            <person name="Okazaki N."/>
            <person name="Yamakawa H."/>
            <person name="Kikuno R."/>
            <person name="Ohara O."/>
            <person name="Nagase T."/>
        </authorList>
    </citation>
    <scope>SEQUENCE REVISION</scope>
</reference>
<reference key="4">
    <citation type="journal article" date="2004" name="Nat. Genet.">
        <title>Complete sequencing and characterization of 21,243 full-length human cDNAs.</title>
        <authorList>
            <person name="Ota T."/>
            <person name="Suzuki Y."/>
            <person name="Nishikawa T."/>
            <person name="Otsuki T."/>
            <person name="Sugiyama T."/>
            <person name="Irie R."/>
            <person name="Wakamatsu A."/>
            <person name="Hayashi K."/>
            <person name="Sato H."/>
            <person name="Nagai K."/>
            <person name="Kimura K."/>
            <person name="Makita H."/>
            <person name="Sekine M."/>
            <person name="Obayashi M."/>
            <person name="Nishi T."/>
            <person name="Shibahara T."/>
            <person name="Tanaka T."/>
            <person name="Ishii S."/>
            <person name="Yamamoto J."/>
            <person name="Saito K."/>
            <person name="Kawai Y."/>
            <person name="Isono Y."/>
            <person name="Nakamura Y."/>
            <person name="Nagahari K."/>
            <person name="Murakami K."/>
            <person name="Yasuda T."/>
            <person name="Iwayanagi T."/>
            <person name="Wagatsuma M."/>
            <person name="Shiratori A."/>
            <person name="Sudo H."/>
            <person name="Hosoiri T."/>
            <person name="Kaku Y."/>
            <person name="Kodaira H."/>
            <person name="Kondo H."/>
            <person name="Sugawara M."/>
            <person name="Takahashi M."/>
            <person name="Kanda K."/>
            <person name="Yokoi T."/>
            <person name="Furuya T."/>
            <person name="Kikkawa E."/>
            <person name="Omura Y."/>
            <person name="Abe K."/>
            <person name="Kamihara K."/>
            <person name="Katsuta N."/>
            <person name="Sato K."/>
            <person name="Tanikawa M."/>
            <person name="Yamazaki M."/>
            <person name="Ninomiya K."/>
            <person name="Ishibashi T."/>
            <person name="Yamashita H."/>
            <person name="Murakawa K."/>
            <person name="Fujimori K."/>
            <person name="Tanai H."/>
            <person name="Kimata M."/>
            <person name="Watanabe M."/>
            <person name="Hiraoka S."/>
            <person name="Chiba Y."/>
            <person name="Ishida S."/>
            <person name="Ono Y."/>
            <person name="Takiguchi S."/>
            <person name="Watanabe S."/>
            <person name="Yosida M."/>
            <person name="Hotuta T."/>
            <person name="Kusano J."/>
            <person name="Kanehori K."/>
            <person name="Takahashi-Fujii A."/>
            <person name="Hara H."/>
            <person name="Tanase T.-O."/>
            <person name="Nomura Y."/>
            <person name="Togiya S."/>
            <person name="Komai F."/>
            <person name="Hara R."/>
            <person name="Takeuchi K."/>
            <person name="Arita M."/>
            <person name="Imose N."/>
            <person name="Musashino K."/>
            <person name="Yuuki H."/>
            <person name="Oshima A."/>
            <person name="Sasaki N."/>
            <person name="Aotsuka S."/>
            <person name="Yoshikawa Y."/>
            <person name="Matsunawa H."/>
            <person name="Ichihara T."/>
            <person name="Shiohata N."/>
            <person name="Sano S."/>
            <person name="Moriya S."/>
            <person name="Momiyama H."/>
            <person name="Satoh N."/>
            <person name="Takami S."/>
            <person name="Terashima Y."/>
            <person name="Suzuki O."/>
            <person name="Nakagawa S."/>
            <person name="Senoh A."/>
            <person name="Mizoguchi H."/>
            <person name="Goto Y."/>
            <person name="Shimizu F."/>
            <person name="Wakebe H."/>
            <person name="Hishigaki H."/>
            <person name="Watanabe T."/>
            <person name="Sugiyama A."/>
            <person name="Takemoto M."/>
            <person name="Kawakami B."/>
            <person name="Yamazaki M."/>
            <person name="Watanabe K."/>
            <person name="Kumagai A."/>
            <person name="Itakura S."/>
            <person name="Fukuzumi Y."/>
            <person name="Fujimori Y."/>
            <person name="Komiyama M."/>
            <person name="Tashiro H."/>
            <person name="Tanigami A."/>
            <person name="Fujiwara T."/>
            <person name="Ono T."/>
            <person name="Yamada K."/>
            <person name="Fujii Y."/>
            <person name="Ozaki K."/>
            <person name="Hirao M."/>
            <person name="Ohmori Y."/>
            <person name="Kawabata A."/>
            <person name="Hikiji T."/>
            <person name="Kobatake N."/>
            <person name="Inagaki H."/>
            <person name="Ikema Y."/>
            <person name="Okamoto S."/>
            <person name="Okitani R."/>
            <person name="Kawakami T."/>
            <person name="Noguchi S."/>
            <person name="Itoh T."/>
            <person name="Shigeta K."/>
            <person name="Senba T."/>
            <person name="Matsumura K."/>
            <person name="Nakajima Y."/>
            <person name="Mizuno T."/>
            <person name="Morinaga M."/>
            <person name="Sasaki M."/>
            <person name="Togashi T."/>
            <person name="Oyama M."/>
            <person name="Hata H."/>
            <person name="Watanabe M."/>
            <person name="Komatsu T."/>
            <person name="Mizushima-Sugano J."/>
            <person name="Satoh T."/>
            <person name="Shirai Y."/>
            <person name="Takahashi Y."/>
            <person name="Nakagawa K."/>
            <person name="Okumura K."/>
            <person name="Nagase T."/>
            <person name="Nomura N."/>
            <person name="Kikuchi H."/>
            <person name="Masuho Y."/>
            <person name="Yamashita R."/>
            <person name="Nakai K."/>
            <person name="Yada T."/>
            <person name="Nakamura Y."/>
            <person name="Ohara O."/>
            <person name="Isogai T."/>
            <person name="Sugano S."/>
        </authorList>
    </citation>
    <scope>NUCLEOTIDE SEQUENCE [LARGE SCALE MRNA] (ISOFORMS 3 AND 4)</scope>
    <source>
        <tissue>Trachea</tissue>
    </source>
</reference>
<reference key="5">
    <citation type="journal article" date="2005" name="Nature">
        <title>Generation and annotation of the DNA sequences of human chromosomes 2 and 4.</title>
        <authorList>
            <person name="Hillier L.W."/>
            <person name="Graves T.A."/>
            <person name="Fulton R.S."/>
            <person name="Fulton L.A."/>
            <person name="Pepin K.H."/>
            <person name="Minx P."/>
            <person name="Wagner-McPherson C."/>
            <person name="Layman D."/>
            <person name="Wylie K."/>
            <person name="Sekhon M."/>
            <person name="Becker M.C."/>
            <person name="Fewell G.A."/>
            <person name="Delehaunty K.D."/>
            <person name="Miner T.L."/>
            <person name="Nash W.E."/>
            <person name="Kremitzki C."/>
            <person name="Oddy L."/>
            <person name="Du H."/>
            <person name="Sun H."/>
            <person name="Bradshaw-Cordum H."/>
            <person name="Ali J."/>
            <person name="Carter J."/>
            <person name="Cordes M."/>
            <person name="Harris A."/>
            <person name="Isak A."/>
            <person name="van Brunt A."/>
            <person name="Nguyen C."/>
            <person name="Du F."/>
            <person name="Courtney L."/>
            <person name="Kalicki J."/>
            <person name="Ozersky P."/>
            <person name="Abbott S."/>
            <person name="Armstrong J."/>
            <person name="Belter E.A."/>
            <person name="Caruso L."/>
            <person name="Cedroni M."/>
            <person name="Cotton M."/>
            <person name="Davidson T."/>
            <person name="Desai A."/>
            <person name="Elliott G."/>
            <person name="Erb T."/>
            <person name="Fronick C."/>
            <person name="Gaige T."/>
            <person name="Haakenson W."/>
            <person name="Haglund K."/>
            <person name="Holmes A."/>
            <person name="Harkins R."/>
            <person name="Kim K."/>
            <person name="Kruchowski S.S."/>
            <person name="Strong C.M."/>
            <person name="Grewal N."/>
            <person name="Goyea E."/>
            <person name="Hou S."/>
            <person name="Levy A."/>
            <person name="Martinka S."/>
            <person name="Mead K."/>
            <person name="McLellan M.D."/>
            <person name="Meyer R."/>
            <person name="Randall-Maher J."/>
            <person name="Tomlinson C."/>
            <person name="Dauphin-Kohlberg S."/>
            <person name="Kozlowicz-Reilly A."/>
            <person name="Shah N."/>
            <person name="Swearengen-Shahid S."/>
            <person name="Snider J."/>
            <person name="Strong J.T."/>
            <person name="Thompson J."/>
            <person name="Yoakum M."/>
            <person name="Leonard S."/>
            <person name="Pearman C."/>
            <person name="Trani L."/>
            <person name="Radionenko M."/>
            <person name="Waligorski J.E."/>
            <person name="Wang C."/>
            <person name="Rock S.M."/>
            <person name="Tin-Wollam A.-M."/>
            <person name="Maupin R."/>
            <person name="Latreille P."/>
            <person name="Wendl M.C."/>
            <person name="Yang S.-P."/>
            <person name="Pohl C."/>
            <person name="Wallis J.W."/>
            <person name="Spieth J."/>
            <person name="Bieri T.A."/>
            <person name="Berkowicz N."/>
            <person name="Nelson J.O."/>
            <person name="Osborne J."/>
            <person name="Ding L."/>
            <person name="Meyer R."/>
            <person name="Sabo A."/>
            <person name="Shotland Y."/>
            <person name="Sinha P."/>
            <person name="Wohldmann P.E."/>
            <person name="Cook L.L."/>
            <person name="Hickenbotham M.T."/>
            <person name="Eldred J."/>
            <person name="Williams D."/>
            <person name="Jones T.A."/>
            <person name="She X."/>
            <person name="Ciccarelli F.D."/>
            <person name="Izaurralde E."/>
            <person name="Taylor J."/>
            <person name="Schmutz J."/>
            <person name="Myers R.M."/>
            <person name="Cox D.R."/>
            <person name="Huang X."/>
            <person name="McPherson J.D."/>
            <person name="Mardis E.R."/>
            <person name="Clifton S.W."/>
            <person name="Warren W.C."/>
            <person name="Chinwalla A.T."/>
            <person name="Eddy S.R."/>
            <person name="Marra M.A."/>
            <person name="Ovcharenko I."/>
            <person name="Furey T.S."/>
            <person name="Miller W."/>
            <person name="Eichler E.E."/>
            <person name="Bork P."/>
            <person name="Suyama M."/>
            <person name="Torrents D."/>
            <person name="Waterston R.H."/>
            <person name="Wilson R.K."/>
        </authorList>
    </citation>
    <scope>NUCLEOTIDE SEQUENCE [LARGE SCALE GENOMIC DNA]</scope>
</reference>
<reference key="6">
    <citation type="submission" date="2005-09" db="EMBL/GenBank/DDBJ databases">
        <authorList>
            <person name="Mural R.J."/>
            <person name="Istrail S."/>
            <person name="Sutton G.G."/>
            <person name="Florea L."/>
            <person name="Halpern A.L."/>
            <person name="Mobarry C.M."/>
            <person name="Lippert R."/>
            <person name="Walenz B."/>
            <person name="Shatkay H."/>
            <person name="Dew I."/>
            <person name="Miller J.R."/>
            <person name="Flanigan M.J."/>
            <person name="Edwards N.J."/>
            <person name="Bolanos R."/>
            <person name="Fasulo D."/>
            <person name="Halldorsson B.V."/>
            <person name="Hannenhalli S."/>
            <person name="Turner R."/>
            <person name="Yooseph S."/>
            <person name="Lu F."/>
            <person name="Nusskern D.R."/>
            <person name="Shue B.C."/>
            <person name="Zheng X.H."/>
            <person name="Zhong F."/>
            <person name="Delcher A.L."/>
            <person name="Huson D.H."/>
            <person name="Kravitz S.A."/>
            <person name="Mouchard L."/>
            <person name="Reinert K."/>
            <person name="Remington K.A."/>
            <person name="Clark A.G."/>
            <person name="Waterman M.S."/>
            <person name="Eichler E.E."/>
            <person name="Adams M.D."/>
            <person name="Hunkapiller M.W."/>
            <person name="Myers E.W."/>
            <person name="Venter J.C."/>
        </authorList>
    </citation>
    <scope>NUCLEOTIDE SEQUENCE [LARGE SCALE GENOMIC DNA]</scope>
</reference>
<reference key="7">
    <citation type="journal article" date="2004" name="Genome Res.">
        <title>The status, quality, and expansion of the NIH full-length cDNA project: the Mammalian Gene Collection (MGC).</title>
        <authorList>
            <consortium name="The MGC Project Team"/>
        </authorList>
    </citation>
    <scope>NUCLEOTIDE SEQUENCE [LARGE SCALE MRNA] (ISOFORM 3)</scope>
    <scope>NUCLEOTIDE SEQUENCE [LARGE SCALE MRNA] OF 578-1066 (ISOFORM 1)</scope>
    <source>
        <tissue>Lung</tissue>
        <tissue>Placenta</tissue>
    </source>
</reference>
<reference key="8">
    <citation type="journal article" date="2003" name="Proc. Natl. Acad. Sci. U.S.A.">
        <title>Human Pumilio-2 is expressed in embryonic stem cells and germ cells and interacts with DAZ (Deleted in AZoospermia) and DAZ-like proteins.</title>
        <authorList>
            <person name="Moore F.L."/>
            <person name="Jaruzelska J."/>
            <person name="Fox M.S."/>
            <person name="Urano J."/>
            <person name="Firpo M.T."/>
            <person name="Turek P.J."/>
            <person name="Dorfman D.M."/>
            <person name="Reijo Pera R.A."/>
        </authorList>
    </citation>
    <scope>NUCLEOTIDE SEQUENCE [MRNA] OF 110-1066 (ISOFORM 2)</scope>
    <scope>TISSUE SPECIFICITY</scope>
    <scope>RNA-BINDING</scope>
    <scope>INTERACTION WITH DAZ1 AND DAZL</scope>
</reference>
<reference key="9">
    <citation type="journal article" date="2003" name="Oncogene">
        <title>Genome-wide comparison of human keratinocyte and squamous cell carcinoma responses to UVB irradiation: implications for skin and epithelial cancer.</title>
        <authorList>
            <person name="Dazard J.-E."/>
            <person name="Gal H."/>
            <person name="Amariglio N."/>
            <person name="Rechavi G."/>
            <person name="Domany E."/>
            <person name="Givol D."/>
        </authorList>
    </citation>
    <scope>INDUCTION</scope>
</reference>
<reference key="10">
    <citation type="journal article" date="2003" name="Dev. Genes Evol.">
        <title>Conservation of a Pumilio-Nanos complex from Drosophila germ plasm to human germ cells.</title>
        <authorList>
            <person name="Jaruzelska J."/>
            <person name="Kotecki M."/>
            <person name="Kusz K."/>
            <person name="Spik A."/>
            <person name="Firpo M."/>
            <person name="Reijo Pera R.A."/>
        </authorList>
    </citation>
    <scope>HOMODIMERIZATION</scope>
    <scope>INTERACTION WITH NANOS1</scope>
</reference>
<reference key="11">
    <citation type="journal article" date="2008" name="J. Proteome Res.">
        <title>Combining protein-based IMAC, peptide-based IMAC, and MudPIT for efficient phosphoproteomic analysis.</title>
        <authorList>
            <person name="Cantin G.T."/>
            <person name="Yi W."/>
            <person name="Lu B."/>
            <person name="Park S.K."/>
            <person name="Xu T."/>
            <person name="Lee J.-D."/>
            <person name="Yates J.R. III"/>
        </authorList>
    </citation>
    <scope>PHOSPHORYLATION [LARGE SCALE ANALYSIS] AT SER-82</scope>
    <scope>IDENTIFICATION BY MASS SPECTROMETRY [LARGE SCALE ANALYSIS]</scope>
    <source>
        <tissue>Cervix carcinoma</tissue>
    </source>
</reference>
<reference key="12">
    <citation type="journal article" date="2008" name="PLoS ONE">
        <title>Comparative analysis of mRNA targets for human PUF-family proteins suggests extensive interaction with the miRNA regulatory system.</title>
        <authorList>
            <person name="Galgano A."/>
            <person name="Forrer M."/>
            <person name="Jaskiewicz L."/>
            <person name="Kanitz A."/>
            <person name="Zavolan M."/>
            <person name="Gerber A.P."/>
        </authorList>
    </citation>
    <scope>FUNCTION</scope>
    <scope>RNA-BINDING</scope>
</reference>
<reference key="13">
    <citation type="journal article" date="2008" name="Proc. Natl. Acad. Sci. U.S.A.">
        <title>A quantitative atlas of mitotic phosphorylation.</title>
        <authorList>
            <person name="Dephoure N."/>
            <person name="Zhou C."/>
            <person name="Villen J."/>
            <person name="Beausoleil S.A."/>
            <person name="Bakalarski C.E."/>
            <person name="Elledge S.J."/>
            <person name="Gygi S.P."/>
        </authorList>
    </citation>
    <scope>PHOSPHORYLATION [LARGE SCALE ANALYSIS] AT SER-82; SER-178; SER-182; THR-184 AND SER-587</scope>
    <scope>IDENTIFICATION BY MASS SPECTROMETRY [LARGE SCALE ANALYSIS]</scope>
    <source>
        <tissue>Cervix carcinoma</tissue>
    </source>
</reference>
<reference key="14">
    <citation type="journal article" date="2009" name="Anal. Chem.">
        <title>Lys-N and trypsin cover complementary parts of the phosphoproteome in a refined SCX-based approach.</title>
        <authorList>
            <person name="Gauci S."/>
            <person name="Helbig A.O."/>
            <person name="Slijper M."/>
            <person name="Krijgsveld J."/>
            <person name="Heck A.J."/>
            <person name="Mohammed S."/>
        </authorList>
    </citation>
    <scope>IDENTIFICATION BY MASS SPECTROMETRY [LARGE SCALE ANALYSIS]</scope>
</reference>
<reference key="15">
    <citation type="journal article" date="2009" name="Mol. Cell. Proteomics">
        <title>Large-scale proteomics analysis of the human kinome.</title>
        <authorList>
            <person name="Oppermann F.S."/>
            <person name="Gnad F."/>
            <person name="Olsen J.V."/>
            <person name="Hornberger R."/>
            <person name="Greff Z."/>
            <person name="Keri G."/>
            <person name="Mann M."/>
            <person name="Daub H."/>
        </authorList>
    </citation>
    <scope>PHOSPHORYLATION [LARGE SCALE ANALYSIS] AT SER-136</scope>
    <scope>IDENTIFICATION BY MASS SPECTROMETRY [LARGE SCALE ANALYSIS]</scope>
</reference>
<reference key="16">
    <citation type="journal article" date="2009" name="Mol. Hum. Reprod.">
        <title>The SNARE-associated component SNAPIN binds PUMILIO2 and NANOS1 proteins in human male germ cells.</title>
        <authorList>
            <person name="Ginter-Matuszewska B."/>
            <person name="Spik A."/>
            <person name="Rembiszewska A."/>
            <person name="Koyias C."/>
            <person name="Kupryjanczyk J."/>
            <person name="Jaruzelska J."/>
        </authorList>
    </citation>
    <scope>SUBCELLULAR LOCATION</scope>
    <scope>TISSUE SPECIFICITY</scope>
    <scope>INTERACTION WITH SNAPIN AND NANOS1</scope>
</reference>
<reference key="17">
    <citation type="journal article" date="2009" name="Sci. Signal.">
        <title>Quantitative phosphoproteomic analysis of T cell receptor signaling reveals system-wide modulation of protein-protein interactions.</title>
        <authorList>
            <person name="Mayya V."/>
            <person name="Lundgren D.H."/>
            <person name="Hwang S.-I."/>
            <person name="Rezaul K."/>
            <person name="Wu L."/>
            <person name="Eng J.K."/>
            <person name="Rodionov V."/>
            <person name="Han D.K."/>
        </authorList>
    </citation>
    <scope>PHOSPHORYLATION [LARGE SCALE ANALYSIS] AT THR-184</scope>
    <scope>IDENTIFICATION BY MASS SPECTROMETRY [LARGE SCALE ANALYSIS]</scope>
    <source>
        <tissue>Leukemic T-cell</tissue>
    </source>
</reference>
<reference key="18">
    <citation type="journal article" date="2010" name="Sci. Signal.">
        <title>Quantitative phosphoproteomics reveals widespread full phosphorylation site occupancy during mitosis.</title>
        <authorList>
            <person name="Olsen J.V."/>
            <person name="Vermeulen M."/>
            <person name="Santamaria A."/>
            <person name="Kumar C."/>
            <person name="Miller M.L."/>
            <person name="Jensen L.J."/>
            <person name="Gnad F."/>
            <person name="Cox J."/>
            <person name="Jensen T.S."/>
            <person name="Nigg E.A."/>
            <person name="Brunak S."/>
            <person name="Mann M."/>
        </authorList>
    </citation>
    <scope>PHOSPHORYLATION [LARGE SCALE ANALYSIS] AT SER-136; SER-182 AND SER-587</scope>
    <scope>IDENTIFICATION BY MASS SPECTROMETRY [LARGE SCALE ANALYSIS]</scope>
    <source>
        <tissue>Cervix carcinoma</tissue>
    </source>
</reference>
<reference key="19">
    <citation type="journal article" date="2011" name="BMC Syst. Biol.">
        <title>Initial characterization of the human central proteome.</title>
        <authorList>
            <person name="Burkard T.R."/>
            <person name="Planyavsky M."/>
            <person name="Kaupe I."/>
            <person name="Breitwieser F.P."/>
            <person name="Buerckstuemmer T."/>
            <person name="Bennett K.L."/>
            <person name="Superti-Furga G."/>
            <person name="Colinge J."/>
        </authorList>
    </citation>
    <scope>IDENTIFICATION BY MASS SPECTROMETRY [LARGE SCALE ANALYSIS]</scope>
</reference>
<reference key="20">
    <citation type="journal article" date="2011" name="Histochem. Cell Biol.">
        <title>NANOS1 and PUMILIO2 bind microRNA biogenesis factor GEMIN3, within chromatoid body in human germ cells.</title>
        <authorList>
            <person name="Ginter-Matuszewska B."/>
            <person name="Kusz K."/>
            <person name="Spik A."/>
            <person name="Grzeszkowiak D."/>
            <person name="Rembiszewska A."/>
            <person name="Kupryjanczyk J."/>
            <person name="Jaruzelska J."/>
        </authorList>
    </citation>
    <scope>INTERACTION WITH DDX20</scope>
</reference>
<reference key="21">
    <citation type="journal article" date="2011" name="Sci. Signal.">
        <title>System-wide temporal characterization of the proteome and phosphoproteome of human embryonic stem cell differentiation.</title>
        <authorList>
            <person name="Rigbolt K.T."/>
            <person name="Prokhorova T.A."/>
            <person name="Akimov V."/>
            <person name="Henningsen J."/>
            <person name="Johansen P.T."/>
            <person name="Kratchmarova I."/>
            <person name="Kassem M."/>
            <person name="Mann M."/>
            <person name="Olsen J.V."/>
            <person name="Blagoev B."/>
        </authorList>
    </citation>
    <scope>PHOSPHORYLATION [LARGE SCALE ANALYSIS] AT SER-136 AND SER-587</scope>
    <scope>IDENTIFICATION BY MASS SPECTROMETRY [LARGE SCALE ANALYSIS]</scope>
</reference>
<reference key="22">
    <citation type="journal article" date="2012" name="Genes Dev.">
        <title>Pumilio facilitates miRNA regulation of the E2F3 oncogene.</title>
        <authorList>
            <person name="Miles W.O."/>
            <person name="Tschop K."/>
            <person name="Herr A."/>
            <person name="Ji J.Y."/>
            <person name="Dyson N.J."/>
        </authorList>
    </citation>
    <scope>FUNCTION</scope>
</reference>
<reference key="23">
    <citation type="journal article" date="2012" name="J. Biol. Chem.">
        <title>Human Pumilio proteins recruit multiple deadenylases to efficiently repress messenger RNAs.</title>
        <authorList>
            <person name="Van Etten J."/>
            <person name="Schagat T.L."/>
            <person name="Hrit J."/>
            <person name="Weidmann C.A."/>
            <person name="Brumbaugh J."/>
            <person name="Coon J.J."/>
            <person name="Goldstrohm A.C."/>
        </authorList>
    </citation>
    <scope>FUNCTION</scope>
    <scope>SUBUNIT</scope>
    <scope>INTERACTION WITH A DEADENYLASE COMPLEX</scope>
</reference>
<reference key="24">
    <citation type="journal article" date="2013" name="J. Proteome Res.">
        <title>Toward a comprehensive characterization of a human cancer cell phosphoproteome.</title>
        <authorList>
            <person name="Zhou H."/>
            <person name="Di Palma S."/>
            <person name="Preisinger C."/>
            <person name="Peng M."/>
            <person name="Polat A.N."/>
            <person name="Heck A.J."/>
            <person name="Mohammed S."/>
        </authorList>
    </citation>
    <scope>PHOSPHORYLATION [LARGE SCALE ANALYSIS] AT SER-67; SER-82; SER-136; SER-178; SER-182; SER-587 AND SER-700</scope>
    <scope>IDENTIFICATION BY MASS SPECTROMETRY [LARGE SCALE ANALYSIS]</scope>
    <source>
        <tissue>Cervix carcinoma</tissue>
        <tissue>Erythroleukemia</tissue>
    </source>
</reference>
<reference key="25">
    <citation type="journal article" date="2013" name="Nucleic Acids Res.">
        <title>The mammalian TRIM-NHL protein TRIM71/LIN-41 is a repressor of mRNA function.</title>
        <authorList>
            <person name="Loedige I."/>
            <person name="Gaidatzis D."/>
            <person name="Sack R."/>
            <person name="Meister G."/>
            <person name="Filipowicz W."/>
        </authorList>
    </citation>
    <scope>INTERACTION WITH TRIM71</scope>
</reference>
<reference key="26">
    <citation type="journal article" date="2014" name="J. Biol. Chem.">
        <title>SCCRO3 (DCUN1D3) antagonizes the neddylation and oncogenic activity of SCCRO (DCUN1D1).</title>
        <authorList>
            <person name="Huang G."/>
            <person name="Stock C."/>
            <person name="Bommelje C.C."/>
            <person name="Weeda V.B."/>
            <person name="Shah K."/>
            <person name="Bains S."/>
            <person name="Buss E."/>
            <person name="Shaha M."/>
            <person name="Rechler W."/>
            <person name="Ramanathan S.Y."/>
            <person name="Singh B."/>
        </authorList>
    </citation>
    <scope>FUNCTION</scope>
</reference>
<reference key="27">
    <citation type="journal article" date="2014" name="J. Proteomics">
        <title>An enzyme assisted RP-RPLC approach for in-depth analysis of human liver phosphoproteome.</title>
        <authorList>
            <person name="Bian Y."/>
            <person name="Song C."/>
            <person name="Cheng K."/>
            <person name="Dong M."/>
            <person name="Wang F."/>
            <person name="Huang J."/>
            <person name="Sun D."/>
            <person name="Wang L."/>
            <person name="Ye M."/>
            <person name="Zou H."/>
        </authorList>
    </citation>
    <scope>PHOSPHORYLATION [LARGE SCALE ANALYSIS] AT SER-136 AND THR-396</scope>
    <scope>IDENTIFICATION BY MASS SPECTROMETRY [LARGE SCALE ANALYSIS]</scope>
    <source>
        <tissue>Liver</tissue>
    </source>
</reference>
<reference key="28">
    <citation type="journal article" date="2014" name="PLoS Pathog.">
        <title>A novel function of human Pumilio proteins in cytoplasmic sensing of viral infection.</title>
        <authorList>
            <person name="Narita R."/>
            <person name="Takahasi K."/>
            <person name="Murakami E."/>
            <person name="Hirano E."/>
            <person name="Yamamoto S.P."/>
            <person name="Yoneyama M."/>
            <person name="Kato H."/>
            <person name="Fujita T."/>
        </authorList>
    </citation>
    <scope>FUNCTION</scope>
    <scope>SUBCELLULAR LOCATION</scope>
    <scope>INTERACTION WITH DHX58</scope>
</reference>
<reference key="29">
    <citation type="journal article" date="2016" name="Cell">
        <title>Noncoding RNA NORAD regulates genomic stability by sequestering PUMILIO proteins.</title>
        <authorList>
            <person name="Lee S."/>
            <person name="Kopp F."/>
            <person name="Chang T.C."/>
            <person name="Sataluri A."/>
            <person name="Chen B."/>
            <person name="Sivakumar S."/>
            <person name="Yu H."/>
            <person name="Xie Y."/>
            <person name="Mendell J.T."/>
        </authorList>
    </citation>
    <scope>FUNCTION</scope>
    <scope>RNA-BINDING</scope>
</reference>
<reference key="30">
    <citation type="journal article" date="2017" name="Mol. Cell">
        <title>A Compendium of RNA-Binding Proteins that Regulate MicroRNA Biogenesis.</title>
        <authorList>
            <person name="Treiber T."/>
            <person name="Treiber N."/>
            <person name="Plessmann U."/>
            <person name="Harlander S."/>
            <person name="Daiss J.L."/>
            <person name="Eichner N."/>
            <person name="Lehmann G."/>
            <person name="Schall K."/>
            <person name="Urlaub H."/>
            <person name="Meister G."/>
        </authorList>
    </citation>
    <scope>FUNCTION</scope>
    <scope>MIRNA-BINDING</scope>
</reference>
<reference key="31">
    <citation type="journal article" date="2011" name="Structure">
        <title>Alternate modes of cognate RNA recognition by human PUMILIO proteins.</title>
        <authorList>
            <person name="Lu G."/>
            <person name="Hall T.M."/>
        </authorList>
    </citation>
    <scope>X-RAY CRYSTALLOGRAPHY (2.0 ANGSTROMS) OF 706-1056 IN COMPLEX WITH CONSENSUS MRNA</scope>
    <scope>FUNCTION</scope>
    <scope>PUMILIO REPEATS</scope>
</reference>
<feature type="chain" id="PRO_0000075919" description="Pumilio homolog 2">
    <location>
        <begin position="1"/>
        <end position="1066"/>
    </location>
</feature>
<feature type="domain" description="PUM-HD" evidence="4">
    <location>
        <begin position="706"/>
        <end position="1048"/>
    </location>
</feature>
<feature type="repeat" description="Pumilio 1" evidence="3 12">
    <location>
        <begin position="726"/>
        <end position="761"/>
    </location>
</feature>
<feature type="repeat" description="Pumilio 2" evidence="3 12">
    <location>
        <begin position="762"/>
        <end position="797"/>
    </location>
</feature>
<feature type="repeat" description="Pumilio 3" evidence="3 12">
    <location>
        <begin position="798"/>
        <end position="835"/>
    </location>
</feature>
<feature type="repeat" description="Pumilio 4" evidence="3 12">
    <location>
        <begin position="836"/>
        <end position="871"/>
    </location>
</feature>
<feature type="repeat" description="Pumilio 5" evidence="3 12">
    <location>
        <begin position="872"/>
        <end position="907"/>
    </location>
</feature>
<feature type="repeat" description="Pumilio 6" evidence="3 12">
    <location>
        <begin position="908"/>
        <end position="943"/>
    </location>
</feature>
<feature type="repeat" description="Pumilio 7" evidence="3 12">
    <location>
        <begin position="944"/>
        <end position="979"/>
    </location>
</feature>
<feature type="repeat" description="Pumilio 8" evidence="3 12">
    <location>
        <begin position="983"/>
        <end position="1022"/>
    </location>
</feature>
<feature type="region of interest" description="Interaction with SNAPIN" evidence="11">
    <location>
        <begin position="1"/>
        <end position="260"/>
    </location>
</feature>
<feature type="region of interest" description="Disordered" evidence="5">
    <location>
        <begin position="106"/>
        <end position="204"/>
    </location>
</feature>
<feature type="region of interest" description="Disordered" evidence="5">
    <location>
        <begin position="494"/>
        <end position="553"/>
    </location>
</feature>
<feature type="region of interest" description="Disordered" evidence="5">
    <location>
        <begin position="620"/>
        <end position="650"/>
    </location>
</feature>
<feature type="region of interest" description="Adenine-nucleotide binding in RNA target" evidence="1">
    <location>
        <begin position="741"/>
        <end position="745"/>
    </location>
</feature>
<feature type="region of interest" description="Uracil-nucleotide binding in RNA target" evidence="1">
    <location>
        <begin position="777"/>
        <end position="781"/>
    </location>
</feature>
<feature type="region of interest" description="Adenine-nucleotide binding in RNA target" evidence="1">
    <location>
        <begin position="813"/>
        <end position="817"/>
    </location>
</feature>
<feature type="region of interest" description="Non-specific-nucleotide binding in RNA target" evidence="1">
    <location>
        <begin position="851"/>
        <end position="855"/>
    </location>
</feature>
<feature type="region of interest" description="Adenine-nucleotide binding in RNA target" evidence="1">
    <location>
        <begin position="887"/>
        <end position="891"/>
    </location>
</feature>
<feature type="region of interest" description="Uracil-nucleotide binding in RNA target" evidence="1">
    <location>
        <begin position="923"/>
        <end position="927"/>
    </location>
</feature>
<feature type="region of interest" description="Guanine-nucleotide binding in RNA target" evidence="1">
    <location>
        <begin position="959"/>
        <end position="963"/>
    </location>
</feature>
<feature type="region of interest" description="Uracil-nucleotide binding in RNA target" evidence="1">
    <location>
        <begin position="1002"/>
        <end position="1006"/>
    </location>
</feature>
<feature type="compositionally biased region" description="Basic and acidic residues" evidence="5">
    <location>
        <begin position="119"/>
        <end position="133"/>
    </location>
</feature>
<feature type="compositionally biased region" description="Low complexity" evidence="5">
    <location>
        <begin position="505"/>
        <end position="514"/>
    </location>
</feature>
<feature type="compositionally biased region" description="Polar residues" evidence="5">
    <location>
        <begin position="515"/>
        <end position="525"/>
    </location>
</feature>
<feature type="compositionally biased region" description="Low complexity" evidence="5">
    <location>
        <begin position="526"/>
        <end position="540"/>
    </location>
</feature>
<feature type="compositionally biased region" description="Low complexity" evidence="5">
    <location>
        <begin position="630"/>
        <end position="650"/>
    </location>
</feature>
<feature type="modified residue" description="Phosphoserine" evidence="33">
    <location>
        <position position="67"/>
    </location>
</feature>
<feature type="modified residue" description="Phosphoserine" evidence="27 28 33">
    <location>
        <position position="82"/>
    </location>
</feature>
<feature type="modified residue" description="Phosphoserine" evidence="1">
    <location>
        <position position="102"/>
    </location>
</feature>
<feature type="modified residue" description="Phosphoserine" evidence="29 31 32 33 34">
    <location>
        <position position="136"/>
    </location>
</feature>
<feature type="modified residue" description="Phosphoserine" evidence="28 33">
    <location>
        <position position="178"/>
    </location>
</feature>
<feature type="modified residue" description="Phosphoserine" evidence="28 31 33">
    <location>
        <position position="182"/>
    </location>
</feature>
<feature type="modified residue" description="Phosphothreonine" evidence="28 30">
    <location>
        <position position="184"/>
    </location>
</feature>
<feature type="modified residue" description="Phosphothreonine" evidence="34">
    <location>
        <position position="396"/>
    </location>
</feature>
<feature type="modified residue" description="Phosphoserine" evidence="28 31 32 33">
    <location>
        <position position="587"/>
    </location>
</feature>
<feature type="modified residue" description="Phosphoserine" evidence="1">
    <location>
        <position position="592"/>
    </location>
</feature>
<feature type="modified residue" description="Omega-N-methylarginine" evidence="1">
    <location>
        <position position="674"/>
    </location>
</feature>
<feature type="modified residue" description="Phosphoserine" evidence="1">
    <location>
        <position position="684"/>
    </location>
</feature>
<feature type="modified residue" description="Phosphoserine" evidence="33">
    <location>
        <position position="700"/>
    </location>
</feature>
<feature type="splice variant" id="VSP_053705" description="In isoform 4." evidence="23">
    <location>
        <begin position="1"/>
        <end position="56"/>
    </location>
</feature>
<feature type="splice variant" id="VSP_009319" description="In isoform 2." evidence="22">
    <location>
        <begin position="574"/>
        <end position="652"/>
    </location>
</feature>
<feature type="splice variant" id="VSP_009320" description="In isoform 3 and isoform 4." evidence="21 23 24 25">
    <location>
        <begin position="829"/>
        <end position="830"/>
    </location>
</feature>
<feature type="sequence variant" id="VAR_057100" description="In dbSNP:rs34032508.">
    <original>N</original>
    <variation>S</variation>
    <location>
        <position position="367"/>
    </location>
</feature>
<feature type="helix" evidence="35">
    <location>
        <begin position="709"/>
        <end position="715"/>
    </location>
</feature>
<feature type="helix" evidence="35">
    <location>
        <begin position="724"/>
        <end position="727"/>
    </location>
</feature>
<feature type="turn" evidence="35">
    <location>
        <begin position="728"/>
        <end position="730"/>
    </location>
</feature>
<feature type="helix" evidence="35">
    <location>
        <begin position="731"/>
        <end position="735"/>
    </location>
</feature>
<feature type="helix" evidence="35">
    <location>
        <begin position="738"/>
        <end position="748"/>
    </location>
</feature>
<feature type="helix" evidence="35">
    <location>
        <begin position="753"/>
        <end position="765"/>
    </location>
</feature>
<feature type="helix" evidence="35">
    <location>
        <begin position="767"/>
        <end position="771"/>
    </location>
</feature>
<feature type="turn" evidence="35">
    <location>
        <begin position="774"/>
        <end position="776"/>
    </location>
</feature>
<feature type="helix" evidence="35">
    <location>
        <begin position="777"/>
        <end position="786"/>
    </location>
</feature>
<feature type="helix" evidence="35">
    <location>
        <begin position="789"/>
        <end position="799"/>
    </location>
</feature>
<feature type="helix" evidence="35">
    <location>
        <begin position="803"/>
        <end position="808"/>
    </location>
</feature>
<feature type="helix" evidence="35">
    <location>
        <begin position="812"/>
        <end position="822"/>
    </location>
</feature>
<feature type="helix" evidence="35">
    <location>
        <begin position="828"/>
        <end position="835"/>
    </location>
</feature>
<feature type="turn" evidence="35">
    <location>
        <begin position="836"/>
        <end position="839"/>
    </location>
</feature>
<feature type="helix" evidence="35">
    <location>
        <begin position="841"/>
        <end position="846"/>
    </location>
</feature>
<feature type="helix" evidence="35">
    <location>
        <begin position="850"/>
        <end position="860"/>
    </location>
</feature>
<feature type="helix" evidence="35">
    <location>
        <begin position="863"/>
        <end position="866"/>
    </location>
</feature>
<feature type="helix" evidence="35">
    <location>
        <begin position="867"/>
        <end position="872"/>
    </location>
</feature>
<feature type="turn" evidence="35">
    <location>
        <begin position="873"/>
        <end position="876"/>
    </location>
</feature>
<feature type="helix" evidence="35">
    <location>
        <begin position="877"/>
        <end position="881"/>
    </location>
</feature>
<feature type="helix" evidence="35">
    <location>
        <begin position="886"/>
        <end position="896"/>
    </location>
</feature>
<feature type="helix" evidence="35">
    <location>
        <begin position="899"/>
        <end position="911"/>
    </location>
</feature>
<feature type="helix" evidence="35">
    <location>
        <begin position="913"/>
        <end position="916"/>
    </location>
</feature>
<feature type="helix" evidence="35">
    <location>
        <begin position="922"/>
        <end position="932"/>
    </location>
</feature>
<feature type="helix" evidence="35">
    <location>
        <begin position="935"/>
        <end position="945"/>
    </location>
</feature>
<feature type="helix" evidence="35">
    <location>
        <begin position="949"/>
        <end position="953"/>
    </location>
</feature>
<feature type="helix" evidence="35">
    <location>
        <begin position="958"/>
        <end position="968"/>
    </location>
</feature>
<feature type="helix" evidence="35">
    <location>
        <begin position="971"/>
        <end position="982"/>
    </location>
</feature>
<feature type="strand" evidence="35">
    <location>
        <begin position="987"/>
        <end position="989"/>
    </location>
</feature>
<feature type="helix" evidence="35">
    <location>
        <begin position="991"/>
        <end position="996"/>
    </location>
</feature>
<feature type="helix" evidence="35">
    <location>
        <begin position="1001"/>
        <end position="1011"/>
    </location>
</feature>
<feature type="helix" evidence="35">
    <location>
        <begin position="1014"/>
        <end position="1024"/>
    </location>
</feature>
<feature type="helix" evidence="35">
    <location>
        <begin position="1025"/>
        <end position="1027"/>
    </location>
</feature>
<feature type="helix" evidence="35">
    <location>
        <begin position="1028"/>
        <end position="1033"/>
    </location>
</feature>
<feature type="helix" evidence="35">
    <location>
        <begin position="1035"/>
        <end position="1037"/>
    </location>
</feature>
<feature type="helix" evidence="35">
    <location>
        <begin position="1040"/>
        <end position="1045"/>
    </location>
</feature>
<name>PUM2_HUMAN</name>
<comment type="function">
    <text evidence="10 12 14 15 17 18 19 20">Sequence-specific RNA-binding protein that acts as a post-transcriptional repressor by binding the 3'-UTR of mRNA targets. Binds to an RNA consensus sequence, the Pumilio Response Element (PRE), 5'-UGUANAUA-3', that is related to the Nanos Response Element (NRE) (, PubMed:21397187). Mediates post-transcriptional repression of transcripts via different mechanisms: acts via direct recruitment of the CCR4-POP2-NOT deadenylase leading to translational inhibition and mRNA degradation (PubMed:22955276). Also mediates deadenylation-independent repression by promoting accessibility of miRNAs (PubMed:18776931, PubMed:22345517). Acts as a post-transcriptional repressor of E2F3 mRNAs by binding to its 3'-UTR and facilitating miRNA regulation (PubMed:22345517). Plays a role in cytoplasmic sensing of viral infection (PubMed:25340845). Represses a program of genes necessary to maintain genomic stability such as key mitotic, DNA repair and DNA replication factors. Its ability to repress those target mRNAs is regulated by the lncRNA NORAD (non-coding RNA activated by DNA damage) which, due to its high abundance and multitude of PUMILIO binding sites, is able to sequester a significant fraction of PUM1 and PUM2 in the cytoplasm (PubMed:26724866). May regulate DCUN1D3 mRNA levels (PubMed:25349211). May support proliferation and self-renewal of stem cells. Binds specifically to miRNA MIR199A precursor, with PUM1, regulates miRNA MIR199A expression at a postranscriptional level (PubMed:28431233).</text>
</comment>
<comment type="subunit">
    <text evidence="2 7 8 11 12 13 15 16 17">Homodimer; homodimerizes in vitro. Interacts with DAZ1, DAZL and NANOS1 via its pumilio repeats. Interacts with NANOS3 (By similarity). Interacts with SNAPIN. Recruits the CCR4-POP2-NOT deadenylase leading to translational inhibition and mRNA degradation. Interacts with DDX20. In case of viral infection, interacts with DHX58 (PubMed:25340845). Interacts with TRIM71 (via NHL repeats) in an RNA-dependent manner (PubMed:23125361).</text>
</comment>
<comment type="interaction">
    <interactant intactId="EBI-311190">
        <id>Q8TB72</id>
    </interactant>
    <interactant intactId="EBI-998198">
        <id>Q8N9W6</id>
        <label>BOLL</label>
    </interactant>
    <organismsDiffer>false</organismsDiffer>
    <experiments>3</experiments>
</comment>
<comment type="interaction">
    <interactant intactId="EBI-311190">
        <id>Q8TB72</id>
    </interactant>
    <interactant intactId="EBI-997955">
        <id>Q9NQZ3</id>
        <label>DAZ1</label>
    </interactant>
    <organismsDiffer>false</organismsDiffer>
    <experiments>5</experiments>
</comment>
<comment type="interaction">
    <interactant intactId="EBI-311190">
        <id>Q8TB72</id>
    </interactant>
    <interactant intactId="EBI-6248094">
        <id>Q9Q2G4</id>
        <label>ORF</label>
    </interactant>
    <organismsDiffer>true</organismsDiffer>
    <experiments>3</experiments>
</comment>
<comment type="subcellular location">
    <subcellularLocation>
        <location evidence="26">Cytoplasm</location>
    </subcellularLocation>
    <subcellularLocation>
        <location evidence="17">Cytoplasmic granule</location>
    </subcellularLocation>
    <subcellularLocation>
        <location evidence="11">Cytoplasm</location>
        <location evidence="11">Perinuclear region</location>
    </subcellularLocation>
    <text evidence="17">The cytoplasmic granules are stress granules which are a dense aggregation in the cytosol composed of proteins and RNAs that appear when the cell is under stress. Colocalizes with NANOS3 in the stress granules. Colocalizes with NANOS1 and SNAPIN in the perinuclear region of germ cells.</text>
</comment>
<comment type="alternative products">
    <event type="alternative splicing"/>
    <isoform>
        <id>Q8TB72-1</id>
        <name>1</name>
        <sequence type="displayed"/>
    </isoform>
    <isoform>
        <id>Q8TB72-2</id>
        <name>2</name>
        <sequence type="described" ref="VSP_009319"/>
    </isoform>
    <isoform>
        <id>Q8TB72-3</id>
        <name>3</name>
        <sequence type="described" ref="VSP_009320"/>
    </isoform>
    <isoform>
        <id>Q8TB72-4</id>
        <name>4</name>
        <sequence type="described" ref="VSP_053705 VSP_009320"/>
    </isoform>
</comment>
<comment type="tissue specificity">
    <text evidence="6 7 11">Expressed in male germ cells of adult testis (at protein level). Highly expressed in testis and ovary. Predominantly expressed in stem cells and germ cells. Expressed at lower level in brain, heart, kidney, liver, muscle, placenta, intestine and stomach Expressed in cerebellum, corpus callosum, caudate nucleus, hippocampus, medulla oblongata and putamen. Expressed in all fetal tissues tested.</text>
</comment>
<comment type="induction">
    <text evidence="9">Down-regulated in keratinocytes upon UVB irradiation.</text>
</comment>
<comment type="domain">
    <text evidence="1 12">The pumilio repeats mediate the association with RNA by packing together to form a right-handed superhelix that approximates a half donut. RNA-binding occurs on the concave side of the surface (PubMed:21397187). PUM2 is composed of 8 pumilio repeats of 36 residues; each repeat binds a single nucleotide in its RNA target. Residues at positions 12 and 16 of the pumilio repeat bind each RNA base via hydrogen bonding or van der Waals contacts with the Watson-Crick edge, while the amino acid at position 13 makes a stacking interaction. The recognition of RNA by pumilio repeats is base specific: cysteine and glutamine at position 12 and 16, respectively, bind adenine; asparagine and glutamine bind uracil; and serine and glutamate bind guanine.</text>
</comment>
<proteinExistence type="evidence at protein level"/>
<protein>
    <recommendedName>
        <fullName>Pumilio homolog 2</fullName>
        <shortName>Pumilio-2</shortName>
    </recommendedName>
</protein>